<comment type="function">
    <text>The M protein has a crucial role in virus assembly and interacts with the RNP complex as well as with the viral membrane.</text>
</comment>
<comment type="subcellular location">
    <subcellularLocation>
        <location evidence="1">Virion</location>
    </subcellularLocation>
</comment>
<comment type="similarity">
    <text evidence="1">Belongs to the morbillivirus/respirovirus/rubulavirus M protein family.</text>
</comment>
<sequence length="382" mass="43027">MAPTQSKVKIHNLAEAHEKVLRAFPIEVEQNSEGNKLLVKQIRIRTLGHADHSNDSICFLNTYGFIKEAVSQTEFMRAGQRPESKNTLTACMLPFGPGPNIGSPQKMLEYAEDIKIHVRKTAGCKEQIVFSLDRTPQVFRGFQFPRDRYVCVPSDKYIKSPGKLVAGPNYCYTITFLSLTFCPSSQKFKVPRPILNFRSTRMRGIHLEIIMKITCSENSPIRKTLITDDPENGPKASVWIHLCNLYKGRNPIKVYDEAYFAEKCKQMLLSVGISDLWGPTIAVHANGKIPKSASLYFNSRGWALHPIADASPTMAKQLWSIGCEIIEVNAILQGSDYSALVDHPDVIYRKIRIDPAKKQYAHSKWNPFKKAISMPDLTGISI</sequence>
<evidence type="ECO:0000305" key="1"/>
<organism>
    <name type="scientific">Human parainfluenza 4b virus (strain 68-333)</name>
    <name type="common">HPIV-4b</name>
    <dbReference type="NCBI Taxonomy" id="11227"/>
    <lineage>
        <taxon>Viruses</taxon>
        <taxon>Riboviria</taxon>
        <taxon>Orthornavirae</taxon>
        <taxon>Negarnaviricota</taxon>
        <taxon>Haploviricotina</taxon>
        <taxon>Monjiviricetes</taxon>
        <taxon>Mononegavirales</taxon>
        <taxon>Paramyxoviridae</taxon>
        <taxon>Rubulavirinae</taxon>
        <taxon>Orthorubulavirus</taxon>
        <taxon>Orthorubulavirus hominis</taxon>
        <taxon>Human orthorubulavirus 4</taxon>
    </lineage>
</organism>
<proteinExistence type="evidence at transcript level"/>
<protein>
    <recommendedName>
        <fullName>Matrix protein</fullName>
    </recommendedName>
</protein>
<reference key="1">
    <citation type="journal article" date="1991" name="J. Gen. Virol.">
        <title>Sequence characterization of the matrix protein genes of parainfluenza virus types 4A and 4B.</title>
        <authorList>
            <person name="Kondo K."/>
            <person name="Fujii M."/>
            <person name="Nakamura T."/>
            <person name="Bando H."/>
            <person name="Kawano M."/>
            <person name="Tsurudome M."/>
            <person name="Komada H."/>
            <person name="Kusakawa S."/>
            <person name="Nishio M."/>
            <person name="Ito Y."/>
        </authorList>
    </citation>
    <scope>NUCLEOTIDE SEQUENCE [MRNA]</scope>
</reference>
<dbReference type="EMBL" id="D10242">
    <property type="protein sequence ID" value="BAA01087.1"/>
    <property type="molecule type" value="mRNA"/>
</dbReference>
<dbReference type="PIR" id="JQ1291">
    <property type="entry name" value="JQ1291"/>
</dbReference>
<dbReference type="SMR" id="P27020"/>
<dbReference type="GO" id="GO:0019031">
    <property type="term" value="C:viral envelope"/>
    <property type="evidence" value="ECO:0007669"/>
    <property type="project" value="UniProtKB-KW"/>
</dbReference>
<dbReference type="GO" id="GO:0039660">
    <property type="term" value="F:structural constituent of virion"/>
    <property type="evidence" value="ECO:0007669"/>
    <property type="project" value="UniProtKB-KW"/>
</dbReference>
<dbReference type="GO" id="GO:0019068">
    <property type="term" value="P:virion assembly"/>
    <property type="evidence" value="ECO:0007669"/>
    <property type="project" value="InterPro"/>
</dbReference>
<dbReference type="Gene3D" id="2.70.20.60">
    <property type="entry name" value="Viral matrix protein, C-terminal domain"/>
    <property type="match status" value="1"/>
</dbReference>
<dbReference type="Gene3D" id="2.70.20.50">
    <property type="entry name" value="Viral matrix protein, N-terminal domain"/>
    <property type="match status" value="1"/>
</dbReference>
<dbReference type="InterPro" id="IPR042539">
    <property type="entry name" value="Matrix_C"/>
</dbReference>
<dbReference type="InterPro" id="IPR042540">
    <property type="entry name" value="Matrix_N"/>
</dbReference>
<dbReference type="InterPro" id="IPR055413">
    <property type="entry name" value="Matrix_Paramyxo_C"/>
</dbReference>
<dbReference type="InterPro" id="IPR000982">
    <property type="entry name" value="Matrix_Paramyxo_N"/>
</dbReference>
<dbReference type="Pfam" id="PF23765">
    <property type="entry name" value="Matrix_Paramyxo_C"/>
    <property type="match status" value="1"/>
</dbReference>
<dbReference type="Pfam" id="PF00661">
    <property type="entry name" value="Matrix_Paramyxo_N"/>
    <property type="match status" value="1"/>
</dbReference>
<gene>
    <name type="primary">M</name>
</gene>
<keyword id="KW-0261">Viral envelope protein</keyword>
<keyword id="KW-0468">Viral matrix protein</keyword>
<keyword id="KW-0946">Virion</keyword>
<feature type="chain" id="PRO_0000142768" description="Matrix protein">
    <location>
        <begin position="1"/>
        <end position="382"/>
    </location>
</feature>
<name>MATRX_PI4HB</name>
<organismHost>
    <name type="scientific">Homo sapiens</name>
    <name type="common">Human</name>
    <dbReference type="NCBI Taxonomy" id="9606"/>
</organismHost>
<accession>P27020</accession>